<proteinExistence type="inferred from homology"/>
<keyword id="KW-0001">2Fe-2S</keyword>
<keyword id="KW-0963">Cytoplasm</keyword>
<keyword id="KW-0408">Iron</keyword>
<keyword id="KW-0411">Iron-sulfur</keyword>
<keyword id="KW-0479">Metal-binding</keyword>
<keyword id="KW-0663">Pyridoxal phosphate</keyword>
<keyword id="KW-0808">Transferase</keyword>
<comment type="function">
    <text evidence="1">Master enzyme that delivers sulfur to a number of partners involved in Fe-S cluster assembly, tRNA modification or cofactor biosynthesis. Catalyzes the removal of elemental sulfur atoms from cysteine to produce alanine. Functions as a sulfur delivery protein for Fe-S cluster synthesis onto IscU, an Fe-S scaffold assembly protein, as well as other S acceptor proteins.</text>
</comment>
<comment type="catalytic activity">
    <reaction evidence="1">
        <text>(sulfur carrier)-H + L-cysteine = (sulfur carrier)-SH + L-alanine</text>
        <dbReference type="Rhea" id="RHEA:43892"/>
        <dbReference type="Rhea" id="RHEA-COMP:14737"/>
        <dbReference type="Rhea" id="RHEA-COMP:14739"/>
        <dbReference type="ChEBI" id="CHEBI:29917"/>
        <dbReference type="ChEBI" id="CHEBI:35235"/>
        <dbReference type="ChEBI" id="CHEBI:57972"/>
        <dbReference type="ChEBI" id="CHEBI:64428"/>
        <dbReference type="EC" id="2.8.1.7"/>
    </reaction>
</comment>
<comment type="cofactor">
    <cofactor evidence="1">
        <name>pyridoxal 5'-phosphate</name>
        <dbReference type="ChEBI" id="CHEBI:597326"/>
    </cofactor>
</comment>
<comment type="pathway">
    <text evidence="1">Cofactor biosynthesis; iron-sulfur cluster biosynthesis.</text>
</comment>
<comment type="subunit">
    <text evidence="1">Homodimer. Forms a heterotetramer with IscU, interacts with other sulfur acceptors.</text>
</comment>
<comment type="subcellular location">
    <subcellularLocation>
        <location evidence="1">Cytoplasm</location>
    </subcellularLocation>
</comment>
<comment type="similarity">
    <text evidence="1">Belongs to the class-V pyridoxal-phosphate-dependent aminotransferase family. NifS/IscS subfamily.</text>
</comment>
<sequence>MKLPIYLDYSATCPVDPRVAEKMVQYMTMDGTFGNPASRSHRYGWQAEEAVDTAREQIAELLNADPREIVFTSGATESDNLAIKGAAHFYSKQGKHVITSKTEHKAVLDTCRQLEREGFEVTYLEPESNGLISLSKLEAAMRDDTVLVSIMHVNNEIGVIQDIEAIGELCRSRKIIFHVDAAQSAGKVAIDVQKLKVDLISLSAHKIYGPKGIGALYVRRKPRIRLEAQMHGGGHERGFRSGTLPTHQIVGMGEAFRIAKLDMEKDYQHALALRNRLLDGVKDMEAVTINGDLDQRVPHNLNISFAFVEGESLLMSLKDLAVSSGSACTSASLEPSYVLRALGLNDELAHSSIRFSFGRFTTEEEIDYAIEQIRVAVEKLRDMSPLWDMYKDGIDLNTVEWAHH</sequence>
<name>ISCS_VIBVU</name>
<feature type="chain" id="PRO_0000150283" description="Cysteine desulfurase IscS">
    <location>
        <begin position="1"/>
        <end position="404"/>
    </location>
</feature>
<feature type="active site" description="Cysteine persulfide intermediate" evidence="1">
    <location>
        <position position="328"/>
    </location>
</feature>
<feature type="binding site" evidence="1">
    <location>
        <begin position="75"/>
        <end position="76"/>
    </location>
    <ligand>
        <name>pyridoxal 5'-phosphate</name>
        <dbReference type="ChEBI" id="CHEBI:597326"/>
    </ligand>
</feature>
<feature type="binding site" evidence="1">
    <location>
        <position position="155"/>
    </location>
    <ligand>
        <name>pyridoxal 5'-phosphate</name>
        <dbReference type="ChEBI" id="CHEBI:597326"/>
    </ligand>
</feature>
<feature type="binding site" evidence="1">
    <location>
        <position position="183"/>
    </location>
    <ligand>
        <name>pyridoxal 5'-phosphate</name>
        <dbReference type="ChEBI" id="CHEBI:597326"/>
    </ligand>
</feature>
<feature type="binding site" evidence="1">
    <location>
        <begin position="203"/>
        <end position="205"/>
    </location>
    <ligand>
        <name>pyridoxal 5'-phosphate</name>
        <dbReference type="ChEBI" id="CHEBI:597326"/>
    </ligand>
</feature>
<feature type="binding site" evidence="1">
    <location>
        <position position="243"/>
    </location>
    <ligand>
        <name>pyridoxal 5'-phosphate</name>
        <dbReference type="ChEBI" id="CHEBI:597326"/>
    </ligand>
</feature>
<feature type="binding site" description="via persulfide group" evidence="1">
    <location>
        <position position="328"/>
    </location>
    <ligand>
        <name>[2Fe-2S] cluster</name>
        <dbReference type="ChEBI" id="CHEBI:190135"/>
        <note>ligand shared with IscU</note>
    </ligand>
</feature>
<feature type="modified residue" description="N6-(pyridoxal phosphate)lysine" evidence="1">
    <location>
        <position position="206"/>
    </location>
</feature>
<accession>Q8DEY7</accession>
<dbReference type="EC" id="2.8.1.7" evidence="1"/>
<dbReference type="EMBL" id="AE016795">
    <property type="protein sequence ID" value="AAO08961.1"/>
    <property type="molecule type" value="Genomic_DNA"/>
</dbReference>
<dbReference type="RefSeq" id="WP_011078537.1">
    <property type="nucleotide sequence ID" value="NC_004459.3"/>
</dbReference>
<dbReference type="SMR" id="Q8DEY7"/>
<dbReference type="KEGG" id="vvu:VV1_0438"/>
<dbReference type="HOGENOM" id="CLU_003433_0_2_6"/>
<dbReference type="UniPathway" id="UPA00266"/>
<dbReference type="Proteomes" id="UP000002275">
    <property type="component" value="Chromosome 1"/>
</dbReference>
<dbReference type="GO" id="GO:1990221">
    <property type="term" value="C:L-cysteine desulfurase complex"/>
    <property type="evidence" value="ECO:0007669"/>
    <property type="project" value="UniProtKB-ARBA"/>
</dbReference>
<dbReference type="GO" id="GO:0051537">
    <property type="term" value="F:2 iron, 2 sulfur cluster binding"/>
    <property type="evidence" value="ECO:0007669"/>
    <property type="project" value="UniProtKB-UniRule"/>
</dbReference>
<dbReference type="GO" id="GO:0031071">
    <property type="term" value="F:cysteine desulfurase activity"/>
    <property type="evidence" value="ECO:0007669"/>
    <property type="project" value="UniProtKB-UniRule"/>
</dbReference>
<dbReference type="GO" id="GO:0046872">
    <property type="term" value="F:metal ion binding"/>
    <property type="evidence" value="ECO:0007669"/>
    <property type="project" value="UniProtKB-KW"/>
</dbReference>
<dbReference type="GO" id="GO:0030170">
    <property type="term" value="F:pyridoxal phosphate binding"/>
    <property type="evidence" value="ECO:0007669"/>
    <property type="project" value="UniProtKB-UniRule"/>
</dbReference>
<dbReference type="GO" id="GO:0044571">
    <property type="term" value="P:[2Fe-2S] cluster assembly"/>
    <property type="evidence" value="ECO:0007669"/>
    <property type="project" value="UniProtKB-UniRule"/>
</dbReference>
<dbReference type="FunFam" id="3.40.640.10:FF:000003">
    <property type="entry name" value="Cysteine desulfurase IscS"/>
    <property type="match status" value="1"/>
</dbReference>
<dbReference type="FunFam" id="3.90.1150.10:FF:000002">
    <property type="entry name" value="Cysteine desulfurase IscS"/>
    <property type="match status" value="1"/>
</dbReference>
<dbReference type="Gene3D" id="3.90.1150.10">
    <property type="entry name" value="Aspartate Aminotransferase, domain 1"/>
    <property type="match status" value="1"/>
</dbReference>
<dbReference type="Gene3D" id="3.40.640.10">
    <property type="entry name" value="Type I PLP-dependent aspartate aminotransferase-like (Major domain)"/>
    <property type="match status" value="1"/>
</dbReference>
<dbReference type="HAMAP" id="MF_00331">
    <property type="entry name" value="Cys_desulf_IscS"/>
    <property type="match status" value="1"/>
</dbReference>
<dbReference type="InterPro" id="IPR000192">
    <property type="entry name" value="Aminotrans_V_dom"/>
</dbReference>
<dbReference type="InterPro" id="IPR020578">
    <property type="entry name" value="Aminotrans_V_PyrdxlP_BS"/>
</dbReference>
<dbReference type="InterPro" id="IPR010240">
    <property type="entry name" value="Cys_deSase_IscS"/>
</dbReference>
<dbReference type="InterPro" id="IPR016454">
    <property type="entry name" value="Cysteine_dSase"/>
</dbReference>
<dbReference type="InterPro" id="IPR015424">
    <property type="entry name" value="PyrdxlP-dep_Trfase"/>
</dbReference>
<dbReference type="InterPro" id="IPR015421">
    <property type="entry name" value="PyrdxlP-dep_Trfase_major"/>
</dbReference>
<dbReference type="InterPro" id="IPR015422">
    <property type="entry name" value="PyrdxlP-dep_Trfase_small"/>
</dbReference>
<dbReference type="NCBIfam" id="TIGR02006">
    <property type="entry name" value="IscS"/>
    <property type="match status" value="1"/>
</dbReference>
<dbReference type="NCBIfam" id="NF002806">
    <property type="entry name" value="PRK02948.1"/>
    <property type="match status" value="1"/>
</dbReference>
<dbReference type="NCBIfam" id="NF010611">
    <property type="entry name" value="PRK14012.1"/>
    <property type="match status" value="1"/>
</dbReference>
<dbReference type="PANTHER" id="PTHR11601:SF34">
    <property type="entry name" value="CYSTEINE DESULFURASE"/>
    <property type="match status" value="1"/>
</dbReference>
<dbReference type="PANTHER" id="PTHR11601">
    <property type="entry name" value="CYSTEINE DESULFURYLASE FAMILY MEMBER"/>
    <property type="match status" value="1"/>
</dbReference>
<dbReference type="Pfam" id="PF00266">
    <property type="entry name" value="Aminotran_5"/>
    <property type="match status" value="1"/>
</dbReference>
<dbReference type="PIRSF" id="PIRSF005572">
    <property type="entry name" value="NifS"/>
    <property type="match status" value="1"/>
</dbReference>
<dbReference type="SUPFAM" id="SSF53383">
    <property type="entry name" value="PLP-dependent transferases"/>
    <property type="match status" value="1"/>
</dbReference>
<dbReference type="PROSITE" id="PS00595">
    <property type="entry name" value="AA_TRANSFER_CLASS_5"/>
    <property type="match status" value="1"/>
</dbReference>
<protein>
    <recommendedName>
        <fullName evidence="1">Cysteine desulfurase IscS</fullName>
        <ecNumber evidence="1">2.8.1.7</ecNumber>
    </recommendedName>
</protein>
<gene>
    <name evidence="1" type="primary">iscS</name>
    <name type="ordered locus">VV1_0438</name>
</gene>
<reference key="1">
    <citation type="submission" date="2002-12" db="EMBL/GenBank/DDBJ databases">
        <title>Complete genome sequence of Vibrio vulnificus CMCP6.</title>
        <authorList>
            <person name="Rhee J.H."/>
            <person name="Kim S.Y."/>
            <person name="Chung S.S."/>
            <person name="Kim J.J."/>
            <person name="Moon Y.H."/>
            <person name="Jeong H."/>
            <person name="Choy H.E."/>
        </authorList>
    </citation>
    <scope>NUCLEOTIDE SEQUENCE [LARGE SCALE GENOMIC DNA]</scope>
    <source>
        <strain>CMCP6</strain>
    </source>
</reference>
<organism>
    <name type="scientific">Vibrio vulnificus (strain CMCP6)</name>
    <dbReference type="NCBI Taxonomy" id="216895"/>
    <lineage>
        <taxon>Bacteria</taxon>
        <taxon>Pseudomonadati</taxon>
        <taxon>Pseudomonadota</taxon>
        <taxon>Gammaproteobacteria</taxon>
        <taxon>Vibrionales</taxon>
        <taxon>Vibrionaceae</taxon>
        <taxon>Vibrio</taxon>
    </lineage>
</organism>
<evidence type="ECO:0000255" key="1">
    <source>
        <dbReference type="HAMAP-Rule" id="MF_00331"/>
    </source>
</evidence>